<dbReference type="EC" id="4.1.2.25" evidence="2"/>
<dbReference type="EC" id="5.1.99.8" evidence="2"/>
<dbReference type="EC" id="1.13.11.81" evidence="2"/>
<dbReference type="EMBL" id="AE000516">
    <property type="protein sequence ID" value="AAK48070.1"/>
    <property type="molecule type" value="Genomic_DNA"/>
</dbReference>
<dbReference type="PIR" id="H70955">
    <property type="entry name" value="H70955"/>
</dbReference>
<dbReference type="RefSeq" id="WP_003419537.1">
    <property type="nucleotide sequence ID" value="NZ_KK341227.1"/>
</dbReference>
<dbReference type="SMR" id="P9WNC4"/>
<dbReference type="GeneID" id="45427593"/>
<dbReference type="KEGG" id="mtc:MT3712.1"/>
<dbReference type="PATRIC" id="fig|83331.31.peg.3995"/>
<dbReference type="HOGENOM" id="CLU_112632_1_1_11"/>
<dbReference type="UniPathway" id="UPA00077">
    <property type="reaction ID" value="UER00154"/>
</dbReference>
<dbReference type="Proteomes" id="UP000001020">
    <property type="component" value="Chromosome"/>
</dbReference>
<dbReference type="GO" id="GO:0005737">
    <property type="term" value="C:cytoplasm"/>
    <property type="evidence" value="ECO:0007669"/>
    <property type="project" value="TreeGrafter"/>
</dbReference>
<dbReference type="GO" id="GO:0004150">
    <property type="term" value="F:dihydroneopterin aldolase activity"/>
    <property type="evidence" value="ECO:0007669"/>
    <property type="project" value="UniProtKB-EC"/>
</dbReference>
<dbReference type="GO" id="GO:0016853">
    <property type="term" value="F:isomerase activity"/>
    <property type="evidence" value="ECO:0007669"/>
    <property type="project" value="UniProtKB-KW"/>
</dbReference>
<dbReference type="GO" id="GO:0016491">
    <property type="term" value="F:oxidoreductase activity"/>
    <property type="evidence" value="ECO:0007669"/>
    <property type="project" value="UniProtKB-KW"/>
</dbReference>
<dbReference type="GO" id="GO:0046656">
    <property type="term" value="P:folic acid biosynthetic process"/>
    <property type="evidence" value="ECO:0007669"/>
    <property type="project" value="UniProtKB-KW"/>
</dbReference>
<dbReference type="GO" id="GO:0046654">
    <property type="term" value="P:tetrahydrofolate biosynthetic process"/>
    <property type="evidence" value="ECO:0007669"/>
    <property type="project" value="UniProtKB-UniPathway"/>
</dbReference>
<dbReference type="CDD" id="cd00534">
    <property type="entry name" value="DHNA_DHNTPE"/>
    <property type="match status" value="1"/>
</dbReference>
<dbReference type="FunFam" id="3.30.1130.10:FF:000003">
    <property type="entry name" value="7,8-dihydroneopterin aldolase"/>
    <property type="match status" value="1"/>
</dbReference>
<dbReference type="Gene3D" id="3.30.1130.10">
    <property type="match status" value="1"/>
</dbReference>
<dbReference type="InterPro" id="IPR006156">
    <property type="entry name" value="Dihydroneopterin_aldolase"/>
</dbReference>
<dbReference type="InterPro" id="IPR006157">
    <property type="entry name" value="FolB_dom"/>
</dbReference>
<dbReference type="InterPro" id="IPR043133">
    <property type="entry name" value="GTP-CH-I_C/QueF"/>
</dbReference>
<dbReference type="NCBIfam" id="TIGR00525">
    <property type="entry name" value="folB"/>
    <property type="match status" value="1"/>
</dbReference>
<dbReference type="NCBIfam" id="TIGR00526">
    <property type="entry name" value="folB_dom"/>
    <property type="match status" value="1"/>
</dbReference>
<dbReference type="PANTHER" id="PTHR42844">
    <property type="entry name" value="DIHYDRONEOPTERIN ALDOLASE 1-RELATED"/>
    <property type="match status" value="1"/>
</dbReference>
<dbReference type="PANTHER" id="PTHR42844:SF1">
    <property type="entry name" value="DIHYDRONEOPTERIN ALDOLASE 1-RELATED"/>
    <property type="match status" value="1"/>
</dbReference>
<dbReference type="Pfam" id="PF02152">
    <property type="entry name" value="FolB"/>
    <property type="match status" value="1"/>
</dbReference>
<dbReference type="SMART" id="SM00905">
    <property type="entry name" value="FolB"/>
    <property type="match status" value="1"/>
</dbReference>
<dbReference type="SUPFAM" id="SSF55620">
    <property type="entry name" value="Tetrahydrobiopterin biosynthesis enzymes-like"/>
    <property type="match status" value="1"/>
</dbReference>
<keyword id="KW-0289">Folate biosynthesis</keyword>
<keyword id="KW-0413">Isomerase</keyword>
<keyword id="KW-0456">Lyase</keyword>
<keyword id="KW-0560">Oxidoreductase</keyword>
<keyword id="KW-1185">Reference proteome</keyword>
<proteinExistence type="inferred from homology"/>
<organism>
    <name type="scientific">Mycobacterium tuberculosis (strain CDC 1551 / Oshkosh)</name>
    <dbReference type="NCBI Taxonomy" id="83331"/>
    <lineage>
        <taxon>Bacteria</taxon>
        <taxon>Bacillati</taxon>
        <taxon>Actinomycetota</taxon>
        <taxon>Actinomycetes</taxon>
        <taxon>Mycobacteriales</taxon>
        <taxon>Mycobacteriaceae</taxon>
        <taxon>Mycobacterium</taxon>
        <taxon>Mycobacterium tuberculosis complex</taxon>
    </lineage>
</organism>
<sequence>MADRIELRGLTVHGRHGVYDHERVAGQRFVIDVTVWIDLAEAANSDDLADTYDYVRLASRAAEIVAGPPRKLIETVGAEIADHVMDDQRVHAVEVAVHKPQAPIPQTFDDVAVVIRRSRRGGRGWVVPAGGAV</sequence>
<name>FOLB_MYCTO</name>
<evidence type="ECO:0000250" key="1">
    <source>
        <dbReference type="UniProtKB" id="P0AC16"/>
    </source>
</evidence>
<evidence type="ECO:0000250" key="2">
    <source>
        <dbReference type="UniProtKB" id="P9WNC5"/>
    </source>
</evidence>
<evidence type="ECO:0000305" key="3"/>
<protein>
    <recommendedName>
        <fullName>Dihydroneopterin aldolase</fullName>
        <shortName>DHNA</shortName>
        <ecNumber evidence="2">4.1.2.25</ecNumber>
    </recommendedName>
    <alternativeName>
        <fullName>7,8-dihydroneopterin 2'-epimerase</fullName>
    </alternativeName>
    <alternativeName>
        <fullName>7,8-dihydroneopterin aldolase</fullName>
    </alternativeName>
    <alternativeName>
        <fullName>7,8-dihydroneopterin epimerase</fullName>
        <ecNumber evidence="2">5.1.99.8</ecNumber>
    </alternativeName>
    <alternativeName>
        <fullName>7,8-dihydroneopterin hydroxylase</fullName>
        <ecNumber evidence="2">1.13.11.81</ecNumber>
    </alternativeName>
    <alternativeName>
        <fullName>Dihydroneopterin epimerase</fullName>
    </alternativeName>
    <alternativeName>
        <fullName>Dihydroneopterin hydroxylase</fullName>
    </alternativeName>
</protein>
<reference key="1">
    <citation type="journal article" date="2002" name="J. Bacteriol.">
        <title>Whole-genome comparison of Mycobacterium tuberculosis clinical and laboratory strains.</title>
        <authorList>
            <person name="Fleischmann R.D."/>
            <person name="Alland D."/>
            <person name="Eisen J.A."/>
            <person name="Carpenter L."/>
            <person name="White O."/>
            <person name="Peterson J.D."/>
            <person name="DeBoy R.T."/>
            <person name="Dodson R.J."/>
            <person name="Gwinn M.L."/>
            <person name="Haft D.H."/>
            <person name="Hickey E.K."/>
            <person name="Kolonay J.F."/>
            <person name="Nelson W.C."/>
            <person name="Umayam L.A."/>
            <person name="Ermolaeva M.D."/>
            <person name="Salzberg S.L."/>
            <person name="Delcher A."/>
            <person name="Utterback T.R."/>
            <person name="Weidman J.F."/>
            <person name="Khouri H.M."/>
            <person name="Gill J."/>
            <person name="Mikula A."/>
            <person name="Bishai W."/>
            <person name="Jacobs W.R. Jr."/>
            <person name="Venter J.C."/>
            <person name="Fraser C.M."/>
        </authorList>
    </citation>
    <scope>NUCLEOTIDE SEQUENCE [LARGE SCALE GENOMIC DNA]</scope>
    <source>
        <strain>CDC 1551 / Oshkosh</strain>
    </source>
</reference>
<gene>
    <name type="primary">folB</name>
    <name type="ordered locus">MT3712.1</name>
</gene>
<accession>P9WNC4</accession>
<accession>L0TG79</accession>
<accession>O06275</accession>
<accession>P0A580</accession>
<comment type="function">
    <text evidence="2">Catalyzes the conversion of 7,8-dihydroneopterin to 6-hydroxymethyl-7,8-dihydropterin, 7,8-dihydromonapterin and 7,8-dihydroxanthopterin, respectively, in equal quantities. After longer incubation times the only product is 6-hydroxymethyl-7,8-dihydropterin.</text>
</comment>
<comment type="catalytic activity">
    <reaction evidence="2">
        <text>7,8-dihydroneopterin = 6-hydroxymethyl-7,8-dihydropterin + glycolaldehyde</text>
        <dbReference type="Rhea" id="RHEA:10540"/>
        <dbReference type="ChEBI" id="CHEBI:17001"/>
        <dbReference type="ChEBI" id="CHEBI:17071"/>
        <dbReference type="ChEBI" id="CHEBI:44841"/>
        <dbReference type="EC" id="4.1.2.25"/>
    </reaction>
</comment>
<comment type="catalytic activity">
    <reaction evidence="2">
        <text>7,8-dihydroneopterin = 7,8-dihydromonapterin</text>
        <dbReference type="Rhea" id="RHEA:45328"/>
        <dbReference type="ChEBI" id="CHEBI:17001"/>
        <dbReference type="ChEBI" id="CHEBI:71175"/>
        <dbReference type="EC" id="5.1.99.8"/>
    </reaction>
</comment>
<comment type="catalytic activity">
    <reaction evidence="2">
        <text>7,8-dihydroneopterin + O2 = 7,8-dihydroxanthopterin + glycolaldehyde + formate + H(+)</text>
        <dbReference type="Rhea" id="RHEA:45332"/>
        <dbReference type="ChEBI" id="CHEBI:15378"/>
        <dbReference type="ChEBI" id="CHEBI:15379"/>
        <dbReference type="ChEBI" id="CHEBI:15740"/>
        <dbReference type="ChEBI" id="CHEBI:17001"/>
        <dbReference type="ChEBI" id="CHEBI:17071"/>
        <dbReference type="ChEBI" id="CHEBI:85130"/>
        <dbReference type="EC" id="1.13.11.81"/>
    </reaction>
</comment>
<comment type="pathway">
    <text>Cofactor biosynthesis; tetrahydrofolate biosynthesis; 2-amino-4-hydroxy-6-hydroxymethyl-7,8-dihydropteridine diphosphate from 7,8-dihydroneopterin triphosphate: step 3/4.</text>
</comment>
<comment type="similarity">
    <text evidence="3">Belongs to the DHNA family.</text>
</comment>
<feature type="chain" id="PRO_0000427151" description="Dihydroneopterin aldolase">
    <location>
        <begin position="1"/>
        <end position="133"/>
    </location>
</feature>
<feature type="active site" description="Proton donor/acceptor" evidence="1">
    <location>
        <position position="99"/>
    </location>
</feature>
<feature type="binding site" evidence="1">
    <location>
        <position position="22"/>
    </location>
    <ligand>
        <name>substrate</name>
    </ligand>
</feature>
<feature type="binding site" evidence="1">
    <location>
        <position position="54"/>
    </location>
    <ligand>
        <name>substrate</name>
    </ligand>
</feature>
<feature type="binding site" evidence="1">
    <location>
        <begin position="73"/>
        <end position="74"/>
    </location>
    <ligand>
        <name>substrate</name>
    </ligand>
</feature>